<keyword id="KW-0325">Glycoprotein</keyword>
<keyword id="KW-0472">Membrane</keyword>
<keyword id="KW-0812">Transmembrane</keyword>
<keyword id="KW-1133">Transmembrane helix</keyword>
<sequence length="521" mass="57721">MKEEIDAPVSTDASGTDLENARDQPSGEKPTAVDIYLVEWDGPNDPELPMNFPLWKKSLITCIFSTLTIWVTFSSSVFSAAAGITSKEFHVSVEVMTLGTSLTVLGFTVGPLVWGPMSELYGRLKPLYIGYAIFIIFQVPVAVAQNLETLMLARFFLGFFGTSALAIIPGALADFWGPVERAIAISLFSAATFVGPIFGPIMYVNTMITLVNGVWTRANHDMSSGGFIVDSSLGWRWTAWITMIPASFFGIIAFLTLPETYHPVLLQRRASRLRKETRIWAYHSRLDENTPTFGEILTKYLFRPIQMLFLEPILVCMTIYISLIYGILYLFFVAYPIAFREVRNWKSLGIAALPFLGILVGVLMGCLLVTIATRLWYAPKLQNGSVVPEDRLPPMIVAAILLPIGLFWFGWTSSPSISWAPQAIAGAPIGMGILMIWMQGLNYLIDVYLVVANSAMSANTLIRSAVSAAFPLFATAMYHKLGVDWATSLLGFLSIAMIPIPVIFYFYGAKIRALSRFSPKW</sequence>
<reference key="1">
    <citation type="journal article" date="2007" name="Appl. Environ. Microbiol.">
        <title>Identification and in vivo functional analysis by gene disruption of ctnA, an activator gene involved in citrinin biosynthesis in Monascus purpureus.</title>
        <authorList>
            <person name="Shimizu T."/>
            <person name="Kinoshita H."/>
            <person name="Nihira T."/>
        </authorList>
    </citation>
    <scope>NUCLEOTIDE SEQUENCE [GENOMIC DNA]</scope>
</reference>
<comment type="function">
    <text evidence="4">MFS transporter; part of the gene cluster that mediates the biosynthesis the mycotoxin citrinin, a hepato-nephrotoxic compound to humans due to inhibition of respiration complex III (PubMed:17586673).</text>
</comment>
<comment type="subcellular location">
    <subcellularLocation>
        <location evidence="1">Membrane</location>
        <topology evidence="1">Multi-pass membrane protein</topology>
    </subcellularLocation>
</comment>
<comment type="similarity">
    <text evidence="1">Belongs to the major facilitator superfamily. CAR1 family.</text>
</comment>
<name>CTNC_MONPU</name>
<evidence type="ECO:0000255" key="1"/>
<evidence type="ECO:0000255" key="2">
    <source>
        <dbReference type="PROSITE-ProRule" id="PRU00498"/>
    </source>
</evidence>
<evidence type="ECO:0000256" key="3">
    <source>
        <dbReference type="SAM" id="MobiDB-lite"/>
    </source>
</evidence>
<evidence type="ECO:0000305" key="4">
    <source>
    </source>
</evidence>
<organism>
    <name type="scientific">Monascus purpureus</name>
    <name type="common">Red mold</name>
    <name type="synonym">Monascus anka</name>
    <dbReference type="NCBI Taxonomy" id="5098"/>
    <lineage>
        <taxon>Eukaryota</taxon>
        <taxon>Fungi</taxon>
        <taxon>Dikarya</taxon>
        <taxon>Ascomycota</taxon>
        <taxon>Pezizomycotina</taxon>
        <taxon>Eurotiomycetes</taxon>
        <taxon>Eurotiomycetidae</taxon>
        <taxon>Eurotiales</taxon>
        <taxon>Aspergillaceae</taxon>
        <taxon>Monascus</taxon>
    </lineage>
</organism>
<feature type="chain" id="PRO_0000440326" description="Citrinin biosynthesis cluster MFS transporter ctnC">
    <location>
        <begin position="1"/>
        <end position="521"/>
    </location>
</feature>
<feature type="transmembrane region" description="Helical" evidence="1">
    <location>
        <begin position="58"/>
        <end position="78"/>
    </location>
</feature>
<feature type="transmembrane region" description="Helical" evidence="1">
    <location>
        <begin position="95"/>
        <end position="115"/>
    </location>
</feature>
<feature type="transmembrane region" description="Helical" evidence="1">
    <location>
        <begin position="124"/>
        <end position="144"/>
    </location>
</feature>
<feature type="transmembrane region" description="Helical" evidence="1">
    <location>
        <begin position="155"/>
        <end position="175"/>
    </location>
</feature>
<feature type="transmembrane region" description="Helical" evidence="1">
    <location>
        <begin position="182"/>
        <end position="202"/>
    </location>
</feature>
<feature type="transmembrane region" description="Helical" evidence="1">
    <location>
        <begin position="237"/>
        <end position="257"/>
    </location>
</feature>
<feature type="transmembrane region" description="Helical" evidence="1">
    <location>
        <begin position="313"/>
        <end position="333"/>
    </location>
</feature>
<feature type="transmembrane region" description="Helical" evidence="1">
    <location>
        <begin position="349"/>
        <end position="369"/>
    </location>
</feature>
<feature type="transmembrane region" description="Helical" evidence="1">
    <location>
        <begin position="392"/>
        <end position="412"/>
    </location>
</feature>
<feature type="transmembrane region" description="Helical" evidence="1">
    <location>
        <begin position="417"/>
        <end position="437"/>
    </location>
</feature>
<feature type="transmembrane region" description="Helical" evidence="1">
    <location>
        <begin position="465"/>
        <end position="485"/>
    </location>
</feature>
<feature type="transmembrane region" description="Helical" evidence="1">
    <location>
        <begin position="489"/>
        <end position="509"/>
    </location>
</feature>
<feature type="region of interest" description="Disordered" evidence="3">
    <location>
        <begin position="1"/>
        <end position="29"/>
    </location>
</feature>
<feature type="glycosylation site" description="N-linked (GlcNAc...) asparagine" evidence="2">
    <location>
        <position position="383"/>
    </location>
</feature>
<gene>
    <name type="primary">ctnC</name>
</gene>
<proteinExistence type="inferred from homology"/>
<accession>Q1ERH8</accession>
<dbReference type="EMBL" id="AB243687">
    <property type="protein sequence ID" value="BAE95340.1"/>
    <property type="molecule type" value="Genomic_DNA"/>
</dbReference>
<dbReference type="SMR" id="Q1ERH8"/>
<dbReference type="GlyCosmos" id="Q1ERH8">
    <property type="glycosylation" value="1 site, No reported glycans"/>
</dbReference>
<dbReference type="GO" id="GO:0005886">
    <property type="term" value="C:plasma membrane"/>
    <property type="evidence" value="ECO:0007669"/>
    <property type="project" value="TreeGrafter"/>
</dbReference>
<dbReference type="GO" id="GO:0022857">
    <property type="term" value="F:transmembrane transporter activity"/>
    <property type="evidence" value="ECO:0007669"/>
    <property type="project" value="InterPro"/>
</dbReference>
<dbReference type="CDD" id="cd17323">
    <property type="entry name" value="MFS_Tpo1_MDR_like"/>
    <property type="match status" value="1"/>
</dbReference>
<dbReference type="FunFam" id="1.20.1250.20:FF:000011">
    <property type="entry name" value="MFS multidrug transporter, putative"/>
    <property type="match status" value="1"/>
</dbReference>
<dbReference type="Gene3D" id="1.20.1250.20">
    <property type="entry name" value="MFS general substrate transporter like domains"/>
    <property type="match status" value="1"/>
</dbReference>
<dbReference type="InterPro" id="IPR011701">
    <property type="entry name" value="MFS"/>
</dbReference>
<dbReference type="InterPro" id="IPR020846">
    <property type="entry name" value="MFS_dom"/>
</dbReference>
<dbReference type="InterPro" id="IPR036259">
    <property type="entry name" value="MFS_trans_sf"/>
</dbReference>
<dbReference type="PANTHER" id="PTHR23502">
    <property type="entry name" value="MAJOR FACILITATOR SUPERFAMILY"/>
    <property type="match status" value="1"/>
</dbReference>
<dbReference type="PANTHER" id="PTHR23502:SF47">
    <property type="entry name" value="MAJOR FACILITATOR SUPERFAMILY (MFS) PROFILE DOMAIN-CONTAINING PROTEIN-RELATED"/>
    <property type="match status" value="1"/>
</dbReference>
<dbReference type="Pfam" id="PF07690">
    <property type="entry name" value="MFS_1"/>
    <property type="match status" value="2"/>
</dbReference>
<dbReference type="SUPFAM" id="SSF103473">
    <property type="entry name" value="MFS general substrate transporter"/>
    <property type="match status" value="1"/>
</dbReference>
<dbReference type="PROSITE" id="PS50850">
    <property type="entry name" value="MFS"/>
    <property type="match status" value="1"/>
</dbReference>
<protein>
    <recommendedName>
        <fullName>Citrinin biosynthesis cluster MFS transporter ctnC</fullName>
    </recommendedName>
</protein>